<keyword id="KW-0963">Cytoplasm</keyword>
<keyword id="KW-0378">Hydrolase</keyword>
<keyword id="KW-1185">Reference proteome</keyword>
<keyword id="KW-0694">RNA-binding</keyword>
<keyword id="KW-0820">tRNA-binding</keyword>
<feature type="chain" id="PRO_1000071230" description="Peptidyl-tRNA hydrolase">
    <location>
        <begin position="1"/>
        <end position="205"/>
    </location>
</feature>
<feature type="active site" description="Proton acceptor" evidence="1">
    <location>
        <position position="19"/>
    </location>
</feature>
<feature type="binding site" evidence="1">
    <location>
        <position position="14"/>
    </location>
    <ligand>
        <name>tRNA</name>
        <dbReference type="ChEBI" id="CHEBI:17843"/>
    </ligand>
</feature>
<feature type="binding site" evidence="1">
    <location>
        <position position="64"/>
    </location>
    <ligand>
        <name>tRNA</name>
        <dbReference type="ChEBI" id="CHEBI:17843"/>
    </ligand>
</feature>
<feature type="binding site" evidence="1">
    <location>
        <position position="66"/>
    </location>
    <ligand>
        <name>tRNA</name>
        <dbReference type="ChEBI" id="CHEBI:17843"/>
    </ligand>
</feature>
<feature type="binding site" evidence="1">
    <location>
        <position position="112"/>
    </location>
    <ligand>
        <name>tRNA</name>
        <dbReference type="ChEBI" id="CHEBI:17843"/>
    </ligand>
</feature>
<feature type="site" description="Discriminates between blocked and unblocked aminoacyl-tRNA" evidence="1">
    <location>
        <position position="9"/>
    </location>
</feature>
<feature type="site" description="Stabilizes the basic form of H active site to accept a proton" evidence="1">
    <location>
        <position position="91"/>
    </location>
</feature>
<sequence length="205" mass="22204">MILLVGLGNPGEKYARNRHNIGFMAADGIVRRHSFSPPRARFQGIVSEGTLDGEKVIVLKPTTYMNESGRAVGEAMRFYKLTPADVVVFYDELDLEPGKVRMKTGGGAAGHNGIRSIAAHIGPEFRRVRIGIGHPGAKDRVLGYVLGDFSKAETADWVETLIEAIADAAPLLATGKDATFANKVHLALNPEPEKKPKTKEKDGDE</sequence>
<dbReference type="EC" id="3.1.1.29" evidence="1"/>
<dbReference type="EMBL" id="CP000774">
    <property type="protein sequence ID" value="ABS63870.1"/>
    <property type="molecule type" value="Genomic_DNA"/>
</dbReference>
<dbReference type="RefSeq" id="WP_012111176.1">
    <property type="nucleotide sequence ID" value="NC_009719.1"/>
</dbReference>
<dbReference type="SMR" id="A7HVD7"/>
<dbReference type="STRING" id="402881.Plav_2256"/>
<dbReference type="KEGG" id="pla:Plav_2256"/>
<dbReference type="eggNOG" id="COG0193">
    <property type="taxonomic scope" value="Bacteria"/>
</dbReference>
<dbReference type="HOGENOM" id="CLU_062456_1_0_5"/>
<dbReference type="OrthoDB" id="9800507at2"/>
<dbReference type="Proteomes" id="UP000006377">
    <property type="component" value="Chromosome"/>
</dbReference>
<dbReference type="GO" id="GO:0005737">
    <property type="term" value="C:cytoplasm"/>
    <property type="evidence" value="ECO:0007669"/>
    <property type="project" value="UniProtKB-SubCell"/>
</dbReference>
<dbReference type="GO" id="GO:0004045">
    <property type="term" value="F:peptidyl-tRNA hydrolase activity"/>
    <property type="evidence" value="ECO:0007669"/>
    <property type="project" value="UniProtKB-UniRule"/>
</dbReference>
<dbReference type="GO" id="GO:0000049">
    <property type="term" value="F:tRNA binding"/>
    <property type="evidence" value="ECO:0007669"/>
    <property type="project" value="UniProtKB-UniRule"/>
</dbReference>
<dbReference type="GO" id="GO:0006515">
    <property type="term" value="P:protein quality control for misfolded or incompletely synthesized proteins"/>
    <property type="evidence" value="ECO:0007669"/>
    <property type="project" value="UniProtKB-UniRule"/>
</dbReference>
<dbReference type="GO" id="GO:0072344">
    <property type="term" value="P:rescue of stalled ribosome"/>
    <property type="evidence" value="ECO:0007669"/>
    <property type="project" value="UniProtKB-UniRule"/>
</dbReference>
<dbReference type="CDD" id="cd00462">
    <property type="entry name" value="PTH"/>
    <property type="match status" value="1"/>
</dbReference>
<dbReference type="FunFam" id="3.40.50.1470:FF:000001">
    <property type="entry name" value="Peptidyl-tRNA hydrolase"/>
    <property type="match status" value="1"/>
</dbReference>
<dbReference type="Gene3D" id="3.40.50.1470">
    <property type="entry name" value="Peptidyl-tRNA hydrolase"/>
    <property type="match status" value="1"/>
</dbReference>
<dbReference type="HAMAP" id="MF_00083">
    <property type="entry name" value="Pept_tRNA_hydro_bact"/>
    <property type="match status" value="1"/>
</dbReference>
<dbReference type="InterPro" id="IPR001328">
    <property type="entry name" value="Pept_tRNA_hydro"/>
</dbReference>
<dbReference type="InterPro" id="IPR018171">
    <property type="entry name" value="Pept_tRNA_hydro_CS"/>
</dbReference>
<dbReference type="InterPro" id="IPR036416">
    <property type="entry name" value="Pept_tRNA_hydro_sf"/>
</dbReference>
<dbReference type="NCBIfam" id="TIGR00447">
    <property type="entry name" value="pth"/>
    <property type="match status" value="1"/>
</dbReference>
<dbReference type="PANTHER" id="PTHR17224">
    <property type="entry name" value="PEPTIDYL-TRNA HYDROLASE"/>
    <property type="match status" value="1"/>
</dbReference>
<dbReference type="PANTHER" id="PTHR17224:SF1">
    <property type="entry name" value="PEPTIDYL-TRNA HYDROLASE"/>
    <property type="match status" value="1"/>
</dbReference>
<dbReference type="Pfam" id="PF01195">
    <property type="entry name" value="Pept_tRNA_hydro"/>
    <property type="match status" value="1"/>
</dbReference>
<dbReference type="SUPFAM" id="SSF53178">
    <property type="entry name" value="Peptidyl-tRNA hydrolase-like"/>
    <property type="match status" value="1"/>
</dbReference>
<dbReference type="PROSITE" id="PS01195">
    <property type="entry name" value="PEPT_TRNA_HYDROL_1"/>
    <property type="match status" value="1"/>
</dbReference>
<dbReference type="PROSITE" id="PS01196">
    <property type="entry name" value="PEPT_TRNA_HYDROL_2"/>
    <property type="match status" value="1"/>
</dbReference>
<name>PTH_PARL1</name>
<gene>
    <name evidence="1" type="primary">pth</name>
    <name type="ordered locus">Plav_2256</name>
</gene>
<comment type="function">
    <text evidence="1">Hydrolyzes ribosome-free peptidyl-tRNAs (with 1 or more amino acids incorporated), which drop off the ribosome during protein synthesis, or as a result of ribosome stalling.</text>
</comment>
<comment type="function">
    <text evidence="1">Catalyzes the release of premature peptidyl moieties from peptidyl-tRNA molecules trapped in stalled 50S ribosomal subunits, and thus maintains levels of free tRNAs and 50S ribosomes.</text>
</comment>
<comment type="catalytic activity">
    <reaction evidence="1">
        <text>an N-acyl-L-alpha-aminoacyl-tRNA + H2O = an N-acyl-L-amino acid + a tRNA + H(+)</text>
        <dbReference type="Rhea" id="RHEA:54448"/>
        <dbReference type="Rhea" id="RHEA-COMP:10123"/>
        <dbReference type="Rhea" id="RHEA-COMP:13883"/>
        <dbReference type="ChEBI" id="CHEBI:15377"/>
        <dbReference type="ChEBI" id="CHEBI:15378"/>
        <dbReference type="ChEBI" id="CHEBI:59874"/>
        <dbReference type="ChEBI" id="CHEBI:78442"/>
        <dbReference type="ChEBI" id="CHEBI:138191"/>
        <dbReference type="EC" id="3.1.1.29"/>
    </reaction>
</comment>
<comment type="subunit">
    <text evidence="1">Monomer.</text>
</comment>
<comment type="subcellular location">
    <subcellularLocation>
        <location evidence="1">Cytoplasm</location>
    </subcellularLocation>
</comment>
<comment type="similarity">
    <text evidence="1">Belongs to the PTH family.</text>
</comment>
<proteinExistence type="inferred from homology"/>
<accession>A7HVD7</accession>
<reference key="1">
    <citation type="journal article" date="2011" name="Stand. Genomic Sci.">
        <title>Complete genome sequence of Parvibaculum lavamentivorans type strain (DS-1(T)).</title>
        <authorList>
            <person name="Schleheck D."/>
            <person name="Weiss M."/>
            <person name="Pitluck S."/>
            <person name="Bruce D."/>
            <person name="Land M.L."/>
            <person name="Han S."/>
            <person name="Saunders E."/>
            <person name="Tapia R."/>
            <person name="Detter C."/>
            <person name="Brettin T."/>
            <person name="Han J."/>
            <person name="Woyke T."/>
            <person name="Goodwin L."/>
            <person name="Pennacchio L."/>
            <person name="Nolan M."/>
            <person name="Cook A.M."/>
            <person name="Kjelleberg S."/>
            <person name="Thomas T."/>
        </authorList>
    </citation>
    <scope>NUCLEOTIDE SEQUENCE [LARGE SCALE GENOMIC DNA]</scope>
    <source>
        <strain>DS-1 / DSM 13023 / NCIMB 13966</strain>
    </source>
</reference>
<protein>
    <recommendedName>
        <fullName evidence="1">Peptidyl-tRNA hydrolase</fullName>
        <shortName evidence="1">Pth</shortName>
        <ecNumber evidence="1">3.1.1.29</ecNumber>
    </recommendedName>
</protein>
<evidence type="ECO:0000255" key="1">
    <source>
        <dbReference type="HAMAP-Rule" id="MF_00083"/>
    </source>
</evidence>
<organism>
    <name type="scientific">Parvibaculum lavamentivorans (strain DS-1 / DSM 13023 / NCIMB 13966)</name>
    <dbReference type="NCBI Taxonomy" id="402881"/>
    <lineage>
        <taxon>Bacteria</taxon>
        <taxon>Pseudomonadati</taxon>
        <taxon>Pseudomonadota</taxon>
        <taxon>Alphaproteobacteria</taxon>
        <taxon>Hyphomicrobiales</taxon>
        <taxon>Parvibaculaceae</taxon>
        <taxon>Parvibaculum</taxon>
    </lineage>
</organism>